<gene>
    <name evidence="2 4" type="primary">metE</name>
    <name type="ordered locus">SMU_873</name>
</gene>
<comment type="function">
    <text evidence="2 3">Catalyzes the transfer of a methyl group from 5-methyltetrahydrofolate to homocysteine resulting in methionine formation.</text>
</comment>
<comment type="catalytic activity">
    <reaction evidence="2 3">
        <text>5-methyltetrahydropteroyltri-L-glutamate + L-homocysteine = tetrahydropteroyltri-L-glutamate + L-methionine</text>
        <dbReference type="Rhea" id="RHEA:21196"/>
        <dbReference type="ChEBI" id="CHEBI:57844"/>
        <dbReference type="ChEBI" id="CHEBI:58140"/>
        <dbReference type="ChEBI" id="CHEBI:58199"/>
        <dbReference type="ChEBI" id="CHEBI:58207"/>
        <dbReference type="EC" id="2.1.1.14"/>
    </reaction>
</comment>
<comment type="cofactor">
    <cofactor evidence="2 3">
        <name>Zn(2+)</name>
        <dbReference type="ChEBI" id="CHEBI:29105"/>
    </cofactor>
    <text evidence="2 3">Binds 1 zinc ion per subunit.</text>
</comment>
<comment type="biophysicochemical properties">
    <kinetics>
        <Vmax evidence="3">0.0096 umol/min/mg enzyme with tetrahydrofolate as substrate (at pH 4.6 and 37 degrees Celsius)</Vmax>
        <Vmax evidence="3">0.125 umol/min/mg enzyme with tetrahydrofolate as substrate (at pH 5.0 and 37 degrees Celsius)</Vmax>
        <Vmax evidence="3">0.135 umol/min/mg enzyme with tetrahydrofolate as substrate (at pH 5.5 and 37 degrees Celsius)</Vmax>
        <Vmax evidence="3">0.152 umol/min/mg enzyme with tetrahydrofolate as substrate (at pH 6.0 and 37 degrees Celsius)</Vmax>
        <Vmax evidence="3">0.155 umol/min/mg enzyme with tetrahydrofolate as substrate (at pH 6.5 and 37 degrees Celsius)</Vmax>
        <Vmax evidence="3">0.148 umol/min/mg enzyme with tetrahydrofolate as substrate (at pH 7.0 and 37 degrees Celsius)</Vmax>
        <Vmax evidence="3">0.146 umol/min/mg enzyme with tetrahydrofolate as substrate (at pH 7.5 and 37 degrees Celsius)</Vmax>
        <Vmax evidence="3">0.15 umol/min/mg enzyme with tetrahydrofolate as substrate (at pH 8.0 and 37 degrees Celsius)</Vmax>
        <Vmax evidence="3">0.146 umol/min/mg enzyme with tetrahydrofolate as substrate (at pH 8.5 and 37 degrees Celsius)</Vmax>
        <Vmax evidence="3">0.119 umol/min/mg enzyme with tetrahydrofolate as substrate (at pH 9.0 and 37 degrees Celsius)</Vmax>
    </kinetics>
    <phDependence>
        <text evidence="3">Optimum pH is between 6-8. Outside of this pH range, the enzyme activity decreases rapidly. At pH 4.6, the enzyme is only 7% as active as it is at pH 7.5.</text>
    </phDependence>
</comment>
<comment type="pathway">
    <text evidence="2 3">Amino-acid biosynthesis; L-methionine biosynthesis via de novo pathway; L-methionine from L-homocysteine (MetE route): step 1/1.</text>
</comment>
<comment type="similarity">
    <text evidence="2">Belongs to the vitamin-B12 independent methionine synthase family.</text>
</comment>
<accession>Q8CWX6</accession>
<proteinExistence type="evidence at protein level"/>
<keyword id="KW-0002">3D-structure</keyword>
<keyword id="KW-0028">Amino-acid biosynthesis</keyword>
<keyword id="KW-0479">Metal-binding</keyword>
<keyword id="KW-0486">Methionine biosynthesis</keyword>
<keyword id="KW-0489">Methyltransferase</keyword>
<keyword id="KW-1185">Reference proteome</keyword>
<keyword id="KW-0677">Repeat</keyword>
<keyword id="KW-0808">Transferase</keyword>
<keyword id="KW-0862">Zinc</keyword>
<dbReference type="EC" id="2.1.1.14" evidence="2 3"/>
<dbReference type="EMBL" id="AE014133">
    <property type="protein sequence ID" value="AAN58588.1"/>
    <property type="molecule type" value="Genomic_DNA"/>
</dbReference>
<dbReference type="RefSeq" id="NP_721282.1">
    <property type="nucleotide sequence ID" value="NC_004350.2"/>
</dbReference>
<dbReference type="RefSeq" id="WP_002262021.1">
    <property type="nucleotide sequence ID" value="NC_004350.2"/>
</dbReference>
<dbReference type="PDB" id="2NQ5">
    <property type="method" value="X-ray"/>
    <property type="resolution" value="1.90 A"/>
    <property type="chains" value="A=2-745"/>
</dbReference>
<dbReference type="PDB" id="3L7R">
    <property type="method" value="X-ray"/>
    <property type="resolution" value="2.40 A"/>
    <property type="chains" value="A=1-745"/>
</dbReference>
<dbReference type="PDB" id="3T0C">
    <property type="method" value="X-ray"/>
    <property type="resolution" value="2.19 A"/>
    <property type="chains" value="A=1-745"/>
</dbReference>
<dbReference type="PDBsum" id="2NQ5"/>
<dbReference type="PDBsum" id="3L7R"/>
<dbReference type="PDBsum" id="3T0C"/>
<dbReference type="SMR" id="Q8CWX6"/>
<dbReference type="STRING" id="210007.SMU_873"/>
<dbReference type="KEGG" id="smu:SMU_873"/>
<dbReference type="PATRIC" id="fig|210007.7.peg.779"/>
<dbReference type="eggNOG" id="COG0620">
    <property type="taxonomic scope" value="Bacteria"/>
</dbReference>
<dbReference type="HOGENOM" id="CLU_013175_0_0_9"/>
<dbReference type="OrthoDB" id="244285at2"/>
<dbReference type="PhylomeDB" id="Q8CWX6"/>
<dbReference type="BRENDA" id="2.1.1.14">
    <property type="organism ID" value="5941"/>
</dbReference>
<dbReference type="UniPathway" id="UPA00051">
    <property type="reaction ID" value="UER00082"/>
</dbReference>
<dbReference type="EvolutionaryTrace" id="Q8CWX6"/>
<dbReference type="Proteomes" id="UP000002512">
    <property type="component" value="Chromosome"/>
</dbReference>
<dbReference type="GO" id="GO:0003871">
    <property type="term" value="F:5-methyltetrahydropteroyltriglutamate-homocysteine S-methyltransferase activity"/>
    <property type="evidence" value="ECO:0000314"/>
    <property type="project" value="UniProtKB"/>
</dbReference>
<dbReference type="GO" id="GO:0008270">
    <property type="term" value="F:zinc ion binding"/>
    <property type="evidence" value="ECO:0000314"/>
    <property type="project" value="UniProtKB"/>
</dbReference>
<dbReference type="GO" id="GO:0071266">
    <property type="term" value="P:'de novo' L-methionine biosynthetic process"/>
    <property type="evidence" value="ECO:0000314"/>
    <property type="project" value="UniProtKB"/>
</dbReference>
<dbReference type="GO" id="GO:0032259">
    <property type="term" value="P:methylation"/>
    <property type="evidence" value="ECO:0007669"/>
    <property type="project" value="UniProtKB-KW"/>
</dbReference>
<dbReference type="CDD" id="cd03311">
    <property type="entry name" value="CIMS_C_terminal_like"/>
    <property type="match status" value="1"/>
</dbReference>
<dbReference type="CDD" id="cd03312">
    <property type="entry name" value="CIMS_N_terminal_like"/>
    <property type="match status" value="1"/>
</dbReference>
<dbReference type="Gene3D" id="3.20.20.210">
    <property type="match status" value="2"/>
</dbReference>
<dbReference type="HAMAP" id="MF_00172">
    <property type="entry name" value="Meth_synth"/>
    <property type="match status" value="1"/>
</dbReference>
<dbReference type="InterPro" id="IPR013215">
    <property type="entry name" value="Cbl-indep_Met_Synth_N"/>
</dbReference>
<dbReference type="InterPro" id="IPR006276">
    <property type="entry name" value="Cobalamin-indep_Met_synthase"/>
</dbReference>
<dbReference type="InterPro" id="IPR002629">
    <property type="entry name" value="Met_Synth_C/arc"/>
</dbReference>
<dbReference type="InterPro" id="IPR038071">
    <property type="entry name" value="UROD/MetE-like_sf"/>
</dbReference>
<dbReference type="NCBIfam" id="TIGR01371">
    <property type="entry name" value="met_syn_B12ind"/>
    <property type="match status" value="1"/>
</dbReference>
<dbReference type="NCBIfam" id="NF003556">
    <property type="entry name" value="PRK05222.1"/>
    <property type="match status" value="1"/>
</dbReference>
<dbReference type="PANTHER" id="PTHR30519">
    <property type="entry name" value="5-METHYLTETRAHYDROPTEROYLTRIGLUTAMATE--HOMOCYSTEINE METHYLTRANSFERASE"/>
    <property type="match status" value="1"/>
</dbReference>
<dbReference type="Pfam" id="PF08267">
    <property type="entry name" value="Meth_synt_1"/>
    <property type="match status" value="1"/>
</dbReference>
<dbReference type="Pfam" id="PF01717">
    <property type="entry name" value="Meth_synt_2"/>
    <property type="match status" value="1"/>
</dbReference>
<dbReference type="PIRSF" id="PIRSF000382">
    <property type="entry name" value="MeTrfase_B12_ind"/>
    <property type="match status" value="1"/>
</dbReference>
<dbReference type="SUPFAM" id="SSF51726">
    <property type="entry name" value="UROD/MetE-like"/>
    <property type="match status" value="2"/>
</dbReference>
<sequence>MTKVSSLGYPRLGENREWKKLIEAYWAGKVSKNDLFAGAKELRLDFLKKQLNAGLDLIPVGDFSLYDHILDLSVQFNIIPKRFAKEPIDIDLYFAIARGNKENVASSMKKWFNTNYHYIVPEWSKQRPKLNNNRLLDLYLEAREVVGDKAKPVITGPITYVALSTGVEDFTAAVKSLLPLYKQVFTELVKAGASYIQVDEPIFVTDEGKDYLQAAKAVYAYFAKEVPDAKFIFQTYFEGLIDSQVLSQLPVDAFGLDFVYGLEENLEAIKTGAFKGKEIFAGVIDGRNIWSSDFVKTSALLETIEEQSAALTIQPSCSLLHVPVTTKNETDLDPVLRNGLAFADEKLTEVKRLAEHLDGREDPAYDLHIAHFDALQAADFRNVKLEDLSRVATKRPSDFAKRRDIQQEKLHLPLLPTTTIGSFPQSREIRRTRLAWKRGDISDAEYKQFIQAEIERWIRIQEDLDLDVLVHGEFERVDMVEFFGQKLAGFTTTKFGWVQSYGSRAVKPPIIYGDVQHLEPITVEETVYAQSLTDRPVKGMLTGPITITNWSFERTDIPRDQLFNQIGLAIKDEIKLLENAGIAIIQVDEAALREGLPLRKSKQKAYLDDAVHAFHIATSSVKDETQIHTHMCYSKFDEIIDAIRALDADVISIETSRSHGDIIESFETAVYPLGIGLGVYDIHSPRVPTKEEVVANIERPLRQLSPTQFWVNPDCGLKTRQEPETIAALKVLVAATKEVRQKLGN</sequence>
<feature type="chain" id="PRO_0000098670" description="5-methyltetrahydropteroyltriglutamate--homocysteine methyltransferase">
    <location>
        <begin position="1"/>
        <end position="745"/>
    </location>
</feature>
<feature type="active site" description="Proton donor" evidence="1">
    <location>
        <position position="683"/>
    </location>
</feature>
<feature type="binding site" evidence="1">
    <location>
        <position position="19"/>
    </location>
    <ligand>
        <name>5-methyltetrahydropteroyltri-L-glutamate</name>
        <dbReference type="ChEBI" id="CHEBI:58207"/>
    </ligand>
</feature>
<feature type="binding site" evidence="1">
    <location>
        <position position="115"/>
    </location>
    <ligand>
        <name>5-methyltetrahydropteroyltri-L-glutamate</name>
        <dbReference type="ChEBI" id="CHEBI:58207"/>
    </ligand>
</feature>
<feature type="binding site" evidence="1">
    <location>
        <begin position="420"/>
        <end position="422"/>
    </location>
    <ligand>
        <name>L-homocysteine</name>
        <dbReference type="ChEBI" id="CHEBI:58199"/>
    </ligand>
</feature>
<feature type="binding site" evidence="1">
    <location>
        <begin position="420"/>
        <end position="422"/>
    </location>
    <ligand>
        <name>L-methionine</name>
        <dbReference type="ChEBI" id="CHEBI:57844"/>
    </ligand>
</feature>
<feature type="binding site" evidence="1">
    <location>
        <position position="473"/>
    </location>
    <ligand>
        <name>L-homocysteine</name>
        <dbReference type="ChEBI" id="CHEBI:58199"/>
    </ligand>
</feature>
<feature type="binding site" evidence="1">
    <location>
        <position position="473"/>
    </location>
    <ligand>
        <name>L-methionine</name>
        <dbReference type="ChEBI" id="CHEBI:57844"/>
    </ligand>
</feature>
<feature type="binding site" evidence="1">
    <location>
        <position position="478"/>
    </location>
    <ligand>
        <name>5-methyltetrahydropteroyltri-L-glutamate</name>
        <dbReference type="ChEBI" id="CHEBI:58207"/>
    </ligand>
</feature>
<feature type="binding site" evidence="1">
    <location>
        <position position="501"/>
    </location>
    <ligand>
        <name>5-methyltetrahydropteroyltri-L-glutamate</name>
        <dbReference type="ChEBI" id="CHEBI:58207"/>
    </ligand>
</feature>
<feature type="binding site" evidence="1">
    <location>
        <begin position="504"/>
        <end position="505"/>
    </location>
    <ligand>
        <name>5-methyltetrahydropteroyltri-L-glutamate</name>
        <dbReference type="ChEBI" id="CHEBI:58207"/>
    </ligand>
</feature>
<feature type="binding site" evidence="1">
    <location>
        <position position="550"/>
    </location>
    <ligand>
        <name>5-methyltetrahydropteroyltri-L-glutamate</name>
        <dbReference type="ChEBI" id="CHEBI:58207"/>
    </ligand>
</feature>
<feature type="binding site" evidence="1">
    <location>
        <position position="588"/>
    </location>
    <ligand>
        <name>L-homocysteine</name>
        <dbReference type="ChEBI" id="CHEBI:58199"/>
    </ligand>
</feature>
<feature type="binding site" evidence="1">
    <location>
        <position position="588"/>
    </location>
    <ligand>
        <name>L-methionine</name>
        <dbReference type="ChEBI" id="CHEBI:57844"/>
    </ligand>
</feature>
<feature type="binding site" evidence="2 3 7">
    <location>
        <position position="630"/>
    </location>
    <ligand>
        <name>Zn(2+)</name>
        <dbReference type="ChEBI" id="CHEBI:29105"/>
        <note>catalytic</note>
    </ligand>
</feature>
<feature type="binding site" evidence="2 3 7">
    <location>
        <position position="632"/>
    </location>
    <ligand>
        <name>Zn(2+)</name>
        <dbReference type="ChEBI" id="CHEBI:29105"/>
        <note>catalytic</note>
    </ligand>
</feature>
<feature type="binding site" evidence="3 7">
    <location>
        <position position="654"/>
    </location>
    <ligand>
        <name>Zn(2+)</name>
        <dbReference type="ChEBI" id="CHEBI:29105"/>
        <note>catalytic</note>
    </ligand>
</feature>
<feature type="binding site" evidence="2 3 7">
    <location>
        <position position="715"/>
    </location>
    <ligand>
        <name>Zn(2+)</name>
        <dbReference type="ChEBI" id="CHEBI:29105"/>
        <note>catalytic</note>
    </ligand>
</feature>
<feature type="strand" evidence="8">
    <location>
        <begin position="3"/>
        <end position="5"/>
    </location>
</feature>
<feature type="helix" evidence="8">
    <location>
        <begin position="17"/>
        <end position="26"/>
    </location>
</feature>
<feature type="helix" evidence="8">
    <location>
        <begin position="32"/>
        <end position="52"/>
    </location>
</feature>
<feature type="strand" evidence="8">
    <location>
        <begin position="56"/>
        <end position="61"/>
    </location>
</feature>
<feature type="helix" evidence="8">
    <location>
        <begin position="68"/>
        <end position="75"/>
    </location>
</feature>
<feature type="helix" evidence="8">
    <location>
        <begin position="81"/>
        <end position="83"/>
    </location>
</feature>
<feature type="helix" evidence="8">
    <location>
        <begin position="90"/>
        <end position="98"/>
    </location>
</feature>
<feature type="strand" evidence="8">
    <location>
        <begin position="101"/>
        <end position="103"/>
    </location>
</feature>
<feature type="strand" evidence="8">
    <location>
        <begin position="108"/>
        <end position="110"/>
    </location>
</feature>
<feature type="strand" evidence="8">
    <location>
        <begin position="117"/>
        <end position="119"/>
    </location>
</feature>
<feature type="helix" evidence="8">
    <location>
        <begin position="134"/>
        <end position="146"/>
    </location>
</feature>
<feature type="helix" evidence="8">
    <location>
        <begin position="147"/>
        <end position="149"/>
    </location>
</feature>
<feature type="strand" evidence="8">
    <location>
        <begin position="150"/>
        <end position="155"/>
    </location>
</feature>
<feature type="helix" evidence="8">
    <location>
        <begin position="157"/>
        <end position="162"/>
    </location>
</feature>
<feature type="helix" evidence="8">
    <location>
        <begin position="170"/>
        <end position="190"/>
    </location>
</feature>
<feature type="strand" evidence="8">
    <location>
        <begin position="195"/>
        <end position="199"/>
    </location>
</feature>
<feature type="helix" evidence="8">
    <location>
        <begin position="201"/>
        <end position="204"/>
    </location>
</feature>
<feature type="helix" evidence="8">
    <location>
        <begin position="207"/>
        <end position="211"/>
    </location>
</feature>
<feature type="helix" evidence="8">
    <location>
        <begin position="212"/>
        <end position="225"/>
    </location>
</feature>
<feature type="strand" evidence="8">
    <location>
        <begin position="230"/>
        <end position="234"/>
    </location>
</feature>
<feature type="helix" evidence="8">
    <location>
        <begin position="243"/>
        <end position="246"/>
    </location>
</feature>
<feature type="strand" evidence="8">
    <location>
        <begin position="252"/>
        <end position="261"/>
    </location>
</feature>
<feature type="helix" evidence="8">
    <location>
        <begin position="262"/>
        <end position="270"/>
    </location>
</feature>
<feature type="turn" evidence="8">
    <location>
        <begin position="271"/>
        <end position="276"/>
    </location>
</feature>
<feature type="strand" evidence="8">
    <location>
        <begin position="277"/>
        <end position="284"/>
    </location>
</feature>
<feature type="strand" evidence="9">
    <location>
        <begin position="286"/>
        <end position="288"/>
    </location>
</feature>
<feature type="helix" evidence="8">
    <location>
        <begin position="294"/>
        <end position="306"/>
    </location>
</feature>
<feature type="strand" evidence="8">
    <location>
        <begin position="308"/>
        <end position="317"/>
    </location>
</feature>
<feature type="helix" evidence="8">
    <location>
        <begin position="319"/>
        <end position="321"/>
    </location>
</feature>
<feature type="helix" evidence="8">
    <location>
        <begin position="334"/>
        <end position="337"/>
    </location>
</feature>
<feature type="helix" evidence="8">
    <location>
        <begin position="343"/>
        <end position="357"/>
    </location>
</feature>
<feature type="helix" evidence="8">
    <location>
        <begin position="364"/>
        <end position="376"/>
    </location>
</feature>
<feature type="helix" evidence="8">
    <location>
        <begin position="379"/>
        <end position="381"/>
    </location>
</feature>
<feature type="helix" evidence="8">
    <location>
        <begin position="388"/>
        <end position="390"/>
    </location>
</feature>
<feature type="helix" evidence="8">
    <location>
        <begin position="399"/>
        <end position="410"/>
    </location>
</feature>
<feature type="turn" evidence="10">
    <location>
        <begin position="430"/>
        <end position="432"/>
    </location>
</feature>
<feature type="helix" evidence="8">
    <location>
        <begin position="444"/>
        <end position="464"/>
    </location>
</feature>
<feature type="strand" evidence="8">
    <location>
        <begin position="467"/>
        <end position="469"/>
    </location>
</feature>
<feature type="helix" evidence="8">
    <location>
        <begin position="481"/>
        <end position="484"/>
    </location>
</feature>
<feature type="strand" evidence="8">
    <location>
        <begin position="487"/>
        <end position="491"/>
    </location>
</feature>
<feature type="strand" evidence="8">
    <location>
        <begin position="498"/>
        <end position="501"/>
    </location>
</feature>
<feature type="strand" evidence="8">
    <location>
        <begin position="504"/>
        <end position="506"/>
    </location>
</feature>
<feature type="strand" evidence="8">
    <location>
        <begin position="510"/>
        <end position="517"/>
    </location>
</feature>
<feature type="helix" evidence="8">
    <location>
        <begin position="523"/>
        <end position="531"/>
    </location>
</feature>
<feature type="strand" evidence="8">
    <location>
        <begin position="537"/>
        <end position="542"/>
    </location>
</feature>
<feature type="helix" evidence="8">
    <location>
        <begin position="544"/>
        <end position="550"/>
    </location>
</feature>
<feature type="strand" evidence="8">
    <location>
        <begin position="555"/>
        <end position="557"/>
    </location>
</feature>
<feature type="helix" evidence="8">
    <location>
        <begin position="559"/>
        <end position="579"/>
    </location>
</feature>
<feature type="strand" evidence="8">
    <location>
        <begin position="584"/>
        <end position="589"/>
    </location>
</feature>
<feature type="helix" evidence="8">
    <location>
        <begin position="592"/>
        <end position="595"/>
    </location>
</feature>
<feature type="helix" evidence="8">
    <location>
        <begin position="600"/>
        <end position="618"/>
    </location>
</feature>
<feature type="strand" evidence="8">
    <location>
        <begin position="619"/>
        <end position="621"/>
    </location>
</feature>
<feature type="strand" evidence="8">
    <location>
        <begin position="625"/>
        <end position="631"/>
    </location>
</feature>
<feature type="turn" evidence="10">
    <location>
        <begin position="637"/>
        <end position="639"/>
    </location>
</feature>
<feature type="helix" evidence="8">
    <location>
        <begin position="640"/>
        <end position="646"/>
    </location>
</feature>
<feature type="strand" evidence="8">
    <location>
        <begin position="649"/>
        <end position="653"/>
    </location>
</feature>
<feature type="helix" evidence="10">
    <location>
        <begin position="656"/>
        <end position="658"/>
    </location>
</feature>
<feature type="helix" evidence="10">
    <location>
        <begin position="661"/>
        <end position="663"/>
    </location>
</feature>
<feature type="helix" evidence="10">
    <location>
        <begin position="664"/>
        <end position="668"/>
    </location>
</feature>
<feature type="strand" evidence="8">
    <location>
        <begin position="674"/>
        <end position="678"/>
    </location>
</feature>
<feature type="helix" evidence="8">
    <location>
        <begin position="690"/>
        <end position="698"/>
    </location>
</feature>
<feature type="helix" evidence="8">
    <location>
        <begin position="699"/>
        <end position="702"/>
    </location>
</feature>
<feature type="helix" evidence="8">
    <location>
        <begin position="706"/>
        <end position="708"/>
    </location>
</feature>
<feature type="strand" evidence="8">
    <location>
        <begin position="709"/>
        <end position="712"/>
    </location>
</feature>
<feature type="strand" evidence="9">
    <location>
        <begin position="717"/>
        <end position="720"/>
    </location>
</feature>
<feature type="helix" evidence="8">
    <location>
        <begin position="722"/>
        <end position="741"/>
    </location>
</feature>
<evidence type="ECO:0000250" key="1">
    <source>
        <dbReference type="UniProtKB" id="P82610"/>
    </source>
</evidence>
<evidence type="ECO:0000255" key="2">
    <source>
        <dbReference type="HAMAP-Rule" id="MF_00172"/>
    </source>
</evidence>
<evidence type="ECO:0000269" key="3">
    <source>
    </source>
</evidence>
<evidence type="ECO:0000303" key="4">
    <source>
    </source>
</evidence>
<evidence type="ECO:0007744" key="5">
    <source>
        <dbReference type="PDB" id="2NQ5"/>
    </source>
</evidence>
<evidence type="ECO:0007744" key="6">
    <source>
        <dbReference type="PDB" id="3L7R"/>
    </source>
</evidence>
<evidence type="ECO:0007744" key="7">
    <source>
        <dbReference type="PDB" id="3T0C"/>
    </source>
</evidence>
<evidence type="ECO:0007829" key="8">
    <source>
        <dbReference type="PDB" id="2NQ5"/>
    </source>
</evidence>
<evidence type="ECO:0007829" key="9">
    <source>
        <dbReference type="PDB" id="3L7R"/>
    </source>
</evidence>
<evidence type="ECO:0007829" key="10">
    <source>
        <dbReference type="PDB" id="3T0C"/>
    </source>
</evidence>
<reference key="1">
    <citation type="journal article" date="2002" name="Proc. Natl. Acad. Sci. U.S.A.">
        <title>Genome sequence of Streptococcus mutans UA159, a cariogenic dental pathogen.</title>
        <authorList>
            <person name="Ajdic D.J."/>
            <person name="McShan W.M."/>
            <person name="McLaughlin R.E."/>
            <person name="Savic G."/>
            <person name="Chang J."/>
            <person name="Carson M.B."/>
            <person name="Primeaux C."/>
            <person name="Tian R."/>
            <person name="Kenton S."/>
            <person name="Jia H.G."/>
            <person name="Lin S.P."/>
            <person name="Qian Y."/>
            <person name="Li S."/>
            <person name="Zhu H."/>
            <person name="Najar F.Z."/>
            <person name="Lai H."/>
            <person name="White J."/>
            <person name="Roe B.A."/>
            <person name="Ferretti J.J."/>
        </authorList>
    </citation>
    <scope>NUCLEOTIDE SEQUENCE [LARGE SCALE GENOMIC DNA]</scope>
    <source>
        <strain>ATCC 700610 / UA159</strain>
    </source>
</reference>
<reference evidence="5" key="2">
    <citation type="submission" date="2006-10" db="PDB data bank">
        <title>Crystal structure of methyltransferase from Streptococcus mutans.</title>
        <authorList>
            <consortium name="New York structural genomics research consortium (NYSGRC)"/>
        </authorList>
    </citation>
    <scope>X-RAY CRYSTALLOGRAPHY (1.90 ANGSTROMS) OF 2-745</scope>
</reference>
<reference evidence="6 7" key="3">
    <citation type="journal article" date="2011" name="J. Mol. Biol.">
        <title>Crystal structures of cobalamin-independent methionine synthase (MetE) from Streptococcus mutans: a dynamic zinc-inversion model.</title>
        <authorList>
            <person name="Fu T.M."/>
            <person name="Almqvist J."/>
            <person name="Liang Y.H."/>
            <person name="Li L."/>
            <person name="Huang Y."/>
            <person name="Su X.D."/>
        </authorList>
    </citation>
    <scope>X-RAY CRYSTALLOGRAPHY (2.19 ANGSTROMS) IN COMPLEXES WITH ZINC</scope>
    <scope>FUNCTION</scope>
    <scope>CATALYTIC ACTIVITY</scope>
    <scope>COFACTOR</scope>
    <scope>BIOPHYSICOCHEMICAL PROPERTIES</scope>
    <scope>PATHWAY</scope>
</reference>
<name>METE_STRMU</name>
<protein>
    <recommendedName>
        <fullName evidence="2 4">5-methyltetrahydropteroyltriglutamate--homocysteine methyltransferase</fullName>
        <ecNumber evidence="2 3">2.1.1.14</ecNumber>
    </recommendedName>
    <alternativeName>
        <fullName evidence="2 4">Cobalamin-independent methionine synthase</fullName>
    </alternativeName>
    <alternativeName>
        <fullName evidence="2">Methionine synthase, vitamin-B12 independent isozyme</fullName>
    </alternativeName>
</protein>
<organism>
    <name type="scientific">Streptococcus mutans serotype c (strain ATCC 700610 / UA159)</name>
    <dbReference type="NCBI Taxonomy" id="210007"/>
    <lineage>
        <taxon>Bacteria</taxon>
        <taxon>Bacillati</taxon>
        <taxon>Bacillota</taxon>
        <taxon>Bacilli</taxon>
        <taxon>Lactobacillales</taxon>
        <taxon>Streptococcaceae</taxon>
        <taxon>Streptococcus</taxon>
    </lineage>
</organism>